<protein>
    <recommendedName>
        <fullName evidence="1">DNA-directed RNA polymerase subunit beta''</fullName>
        <ecNumber evidence="1">2.7.7.6</ecNumber>
    </recommendedName>
    <alternativeName>
        <fullName evidence="1">PEP</fullName>
    </alternativeName>
    <alternativeName>
        <fullName evidence="1">Plastid-encoded RNA polymerase subunit beta''</fullName>
        <shortName evidence="1">RNA polymerase subunit beta''</shortName>
    </alternativeName>
</protein>
<keyword id="KW-0150">Chloroplast</keyword>
<keyword id="KW-0240">DNA-directed RNA polymerase</keyword>
<keyword id="KW-0479">Metal-binding</keyword>
<keyword id="KW-0548">Nucleotidyltransferase</keyword>
<keyword id="KW-0934">Plastid</keyword>
<keyword id="KW-1185">Reference proteome</keyword>
<keyword id="KW-0804">Transcription</keyword>
<keyword id="KW-0808">Transferase</keyword>
<keyword id="KW-0862">Zinc</keyword>
<evidence type="ECO:0000255" key="1">
    <source>
        <dbReference type="HAMAP-Rule" id="MF_01324"/>
    </source>
</evidence>
<geneLocation type="chloroplast"/>
<sequence length="1394" mass="158576">MGVLMTERANLVFHNKVIDGTAMKRLISRLIDHFGMAYTSHILDQVKTLGFQQATATSISLGIDDLLTIPSKGWLVQDAEQQSLILEKHHHYGNVHAVEKLRQSIEIWYATSEYLRQEMNTNFRMTDPFNPVHIMSFSGARGNASQVHQLVGMRGLMSDPQGQMIDLPIQSNLREGLSLTEYIISCYGARKGVVDTAVRTSDAGYLTRRLVEVVQHIVVRRTDCGTIRGISVSPRNGMIPERIFIQTLIGRVLADDIYMGPRCIAIRNQDIGIGLVNRFITFQAQTISIRTPFTCKSTSWICRLCYGRSPTHGDLVELGEAVGIIAGQSIGEPGTQLTLRTFHTGGVFTGGTAEHVRAPSNGKIKFNEDWVHPTRTRHGHPAFLCYIDLYVTIESEGIIHNVNIPPKSFLLVQNDQYVESEQVIAEIRAGTYTFNFKERVRKHIYSDSEGEMHWSTDVYHAPEFTYGNVHLLPKTSHLWILSGGSCRFSIVPFSIHKDQDQMSVRSLSVERRYISNPSVTNDQVIHEFFSSDLSGKKEGRIPAYSELNRIIYTGRYNLIDPAILHENSDLLAKRRRNRFIIPFQSIQEGEKELMPPSGISIEIPINGIFRRNSILAYFDDPRYRRNSSGITKYGTIEAHSIVKKEDLIEYRGVKEFKPKYQMKVDRFFFIPEEVHILPGSASIMVRNNSIIGVDTRITLNTRSRVSGLVRVERKKKRIELKIFSGDIQFPGETNKISRHIGILIPPGTRKKNSKESKKLKNWIYVQGITPTKKKYFVLVRPVVTYEIADGINLATLFPQDLLQERDNMHLQVVNYILYGNGKPIRGISDTSIQLVRTCLVLNWYQEKKSSPIEKTHASFMEVRTNGLIRDFLTINLVKSYISYTGKRNDPSSSGLIADNGSDHTNINPFYSIYPKERIQQLLRQRQKKNQGTIRTLLNRNKECQSLIILSSSNCSRMGPFNDVKYHNVIKESIKKDTPIPIRNSLGPLGTALQITNFYSFYHLITHNHILVTKYFQLDNFKQTFQTLKYYLMDENGITYNPDPCSNIILNPFNLNWYFLHHNYCEETSTIISLGQFICENVCIAKNGPHLKSGQVLIVQVDSVVIRSAKPYLATLGATVHGHYGEILYEGDTLVTFIYEKSRSGDITQGLPKVEQVLEVRSIDSISMNLEKRVEGWNEHITRILGIPWGFFIGAELTIAQSRISLVNKIQKVYRSQGVQIHNRHIEIIVRQITSKVLVSEDGMSNVFSPGELIGLLRAERTGRAFEEAICYRTILLGITRASLNTQSFISEASFQETARVLAKAALWGRIDWLKGLKENVVLGGMIPVGTGFKGLVHRSRQHNNIPLEMETKKNNLFEREMRDILFHHRELFDSCSSKNFHDTSEQSFMGFNDS</sequence>
<organism>
    <name type="scientific">Vitis vinifera</name>
    <name type="common">Grape</name>
    <dbReference type="NCBI Taxonomy" id="29760"/>
    <lineage>
        <taxon>Eukaryota</taxon>
        <taxon>Viridiplantae</taxon>
        <taxon>Streptophyta</taxon>
        <taxon>Embryophyta</taxon>
        <taxon>Tracheophyta</taxon>
        <taxon>Spermatophyta</taxon>
        <taxon>Magnoliopsida</taxon>
        <taxon>eudicotyledons</taxon>
        <taxon>Gunneridae</taxon>
        <taxon>Pentapetalae</taxon>
        <taxon>rosids</taxon>
        <taxon>Vitales</taxon>
        <taxon>Vitaceae</taxon>
        <taxon>Viteae</taxon>
        <taxon>Vitis</taxon>
    </lineage>
</organism>
<reference key="1">
    <citation type="journal article" date="2006" name="BMC Evol. Biol.">
        <title>Phylogenetic analyses of Vitis (Vitaceae) based on complete chloroplast genome sequences: effects of taxon sampling and phylogenetic methods on resolving relationships among rosids.</title>
        <authorList>
            <person name="Jansen R.K."/>
            <person name="Kaittanis C."/>
            <person name="Lee S.-B."/>
            <person name="Saski C."/>
            <person name="Tomkins J."/>
            <person name="Alverson A.J."/>
            <person name="Daniell H."/>
        </authorList>
    </citation>
    <scope>NUCLEOTIDE SEQUENCE [LARGE SCALE GENOMIC DNA]</scope>
    <source>
        <strain>cv. Maxxa</strain>
    </source>
</reference>
<feature type="chain" id="PRO_0000277205" description="DNA-directed RNA polymerase subunit beta''">
    <location>
        <begin position="1"/>
        <end position="1394"/>
    </location>
</feature>
<feature type="binding site" evidence="1">
    <location>
        <position position="224"/>
    </location>
    <ligand>
        <name>Zn(2+)</name>
        <dbReference type="ChEBI" id="CHEBI:29105"/>
    </ligand>
</feature>
<feature type="binding site" evidence="1">
    <location>
        <position position="295"/>
    </location>
    <ligand>
        <name>Zn(2+)</name>
        <dbReference type="ChEBI" id="CHEBI:29105"/>
    </ligand>
</feature>
<feature type="binding site" evidence="1">
    <location>
        <position position="302"/>
    </location>
    <ligand>
        <name>Zn(2+)</name>
        <dbReference type="ChEBI" id="CHEBI:29105"/>
    </ligand>
</feature>
<feature type="binding site" evidence="1">
    <location>
        <position position="305"/>
    </location>
    <ligand>
        <name>Zn(2+)</name>
        <dbReference type="ChEBI" id="CHEBI:29105"/>
    </ligand>
</feature>
<accession>Q0ZJ30</accession>
<gene>
    <name evidence="1" type="primary">rpoC2</name>
</gene>
<proteinExistence type="inferred from homology"/>
<comment type="function">
    <text evidence="1">DNA-dependent RNA polymerase catalyzes the transcription of DNA into RNA using the four ribonucleoside triphosphates as substrates.</text>
</comment>
<comment type="catalytic activity">
    <reaction evidence="1">
        <text>RNA(n) + a ribonucleoside 5'-triphosphate = RNA(n+1) + diphosphate</text>
        <dbReference type="Rhea" id="RHEA:21248"/>
        <dbReference type="Rhea" id="RHEA-COMP:14527"/>
        <dbReference type="Rhea" id="RHEA-COMP:17342"/>
        <dbReference type="ChEBI" id="CHEBI:33019"/>
        <dbReference type="ChEBI" id="CHEBI:61557"/>
        <dbReference type="ChEBI" id="CHEBI:140395"/>
        <dbReference type="EC" id="2.7.7.6"/>
    </reaction>
</comment>
<comment type="cofactor">
    <cofactor evidence="1">
        <name>Zn(2+)</name>
        <dbReference type="ChEBI" id="CHEBI:29105"/>
    </cofactor>
    <text evidence="1">Binds 1 Zn(2+) ion per subunit.</text>
</comment>
<comment type="subunit">
    <text evidence="1">In plastids the minimal PEP RNA polymerase catalytic core is composed of four subunits: alpha, beta, beta', and beta''. When a (nuclear-encoded) sigma factor is associated with the core the holoenzyme is formed, which can initiate transcription.</text>
</comment>
<comment type="subcellular location">
    <subcellularLocation>
        <location evidence="1">Plastid</location>
        <location evidence="1">Chloroplast</location>
    </subcellularLocation>
</comment>
<comment type="similarity">
    <text evidence="1">Belongs to the RNA polymerase beta' chain family. RpoC2 subfamily.</text>
</comment>
<name>RPOC2_VITVI</name>
<dbReference type="EC" id="2.7.7.6" evidence="1"/>
<dbReference type="EMBL" id="DQ424856">
    <property type="protein sequence ID" value="ABE47524.1"/>
    <property type="molecule type" value="Genomic_DNA"/>
</dbReference>
<dbReference type="RefSeq" id="YP_567066.1">
    <property type="nucleotide sequence ID" value="NC_007957.1"/>
</dbReference>
<dbReference type="SMR" id="Q0ZJ30"/>
<dbReference type="FunCoup" id="Q0ZJ30">
    <property type="interactions" value="58"/>
</dbReference>
<dbReference type="STRING" id="29760.Q0ZJ30"/>
<dbReference type="PaxDb" id="29760-VIT_15s0024g01960.t01"/>
<dbReference type="GeneID" id="4025097"/>
<dbReference type="KEGG" id="vvi:4025097"/>
<dbReference type="eggNOG" id="ENOG502R2HI">
    <property type="taxonomic scope" value="Eukaryota"/>
</dbReference>
<dbReference type="InParanoid" id="Q0ZJ30"/>
<dbReference type="OrthoDB" id="1708467at2759"/>
<dbReference type="Proteomes" id="UP000009183">
    <property type="component" value="Chloroplast"/>
</dbReference>
<dbReference type="ExpressionAtlas" id="Q0ZJ30">
    <property type="expression patterns" value="baseline and differential"/>
</dbReference>
<dbReference type="GO" id="GO:0009507">
    <property type="term" value="C:chloroplast"/>
    <property type="evidence" value="ECO:0007669"/>
    <property type="project" value="UniProtKB-SubCell"/>
</dbReference>
<dbReference type="GO" id="GO:0000428">
    <property type="term" value="C:DNA-directed RNA polymerase complex"/>
    <property type="evidence" value="ECO:0007669"/>
    <property type="project" value="UniProtKB-KW"/>
</dbReference>
<dbReference type="GO" id="GO:0005739">
    <property type="term" value="C:mitochondrion"/>
    <property type="evidence" value="ECO:0007669"/>
    <property type="project" value="GOC"/>
</dbReference>
<dbReference type="GO" id="GO:0003677">
    <property type="term" value="F:DNA binding"/>
    <property type="evidence" value="ECO:0007669"/>
    <property type="project" value="UniProtKB-UniRule"/>
</dbReference>
<dbReference type="GO" id="GO:0003899">
    <property type="term" value="F:DNA-directed RNA polymerase activity"/>
    <property type="evidence" value="ECO:0007669"/>
    <property type="project" value="UniProtKB-UniRule"/>
</dbReference>
<dbReference type="GO" id="GO:0008270">
    <property type="term" value="F:zinc ion binding"/>
    <property type="evidence" value="ECO:0007669"/>
    <property type="project" value="UniProtKB-UniRule"/>
</dbReference>
<dbReference type="GO" id="GO:0006351">
    <property type="term" value="P:DNA-templated transcription"/>
    <property type="evidence" value="ECO:0007669"/>
    <property type="project" value="UniProtKB-UniRule"/>
</dbReference>
<dbReference type="CDD" id="cd02655">
    <property type="entry name" value="RNAP_beta'_C"/>
    <property type="match status" value="1"/>
</dbReference>
<dbReference type="FunFam" id="1.10.132.30:FF:000002">
    <property type="entry name" value="DNA-directed RNA polymerase subunit beta"/>
    <property type="match status" value="1"/>
</dbReference>
<dbReference type="FunFam" id="1.10.1790.20:FF:000002">
    <property type="entry name" value="DNA-directed RNA polymerase subunit beta"/>
    <property type="match status" value="1"/>
</dbReference>
<dbReference type="Gene3D" id="1.10.132.30">
    <property type="match status" value="1"/>
</dbReference>
<dbReference type="Gene3D" id="1.10.150.390">
    <property type="match status" value="1"/>
</dbReference>
<dbReference type="Gene3D" id="1.10.1790.20">
    <property type="match status" value="1"/>
</dbReference>
<dbReference type="Gene3D" id="1.10.274.100">
    <property type="entry name" value="RNA polymerase Rpb1, domain 3"/>
    <property type="match status" value="1"/>
</dbReference>
<dbReference type="HAMAP" id="MF_01324">
    <property type="entry name" value="RNApol_bact_RpoC2"/>
    <property type="match status" value="1"/>
</dbReference>
<dbReference type="InterPro" id="IPR012756">
    <property type="entry name" value="DNA-dir_RpoC2_beta_pp"/>
</dbReference>
<dbReference type="InterPro" id="IPR050254">
    <property type="entry name" value="RNA_pol_beta''_euk"/>
</dbReference>
<dbReference type="InterPro" id="IPR042102">
    <property type="entry name" value="RNA_pol_Rpb1_3_sf"/>
</dbReference>
<dbReference type="InterPro" id="IPR007083">
    <property type="entry name" value="RNA_pol_Rpb1_4"/>
</dbReference>
<dbReference type="InterPro" id="IPR007081">
    <property type="entry name" value="RNA_pol_Rpb1_5"/>
</dbReference>
<dbReference type="InterPro" id="IPR038120">
    <property type="entry name" value="Rpb1_funnel_sf"/>
</dbReference>
<dbReference type="NCBIfam" id="TIGR02388">
    <property type="entry name" value="rpoC2_cyan"/>
    <property type="match status" value="1"/>
</dbReference>
<dbReference type="PANTHER" id="PTHR34995">
    <property type="entry name" value="DNA-DIRECTED RNA POLYMERASE SUBUNIT BETA"/>
    <property type="match status" value="1"/>
</dbReference>
<dbReference type="PANTHER" id="PTHR34995:SF1">
    <property type="entry name" value="DNA-DIRECTED RNA POLYMERASE SUBUNIT BETA"/>
    <property type="match status" value="1"/>
</dbReference>
<dbReference type="Pfam" id="PF05000">
    <property type="entry name" value="RNA_pol_Rpb1_4"/>
    <property type="match status" value="1"/>
</dbReference>
<dbReference type="Pfam" id="PF04998">
    <property type="entry name" value="RNA_pol_Rpb1_5"/>
    <property type="match status" value="2"/>
</dbReference>
<dbReference type="SUPFAM" id="SSF64484">
    <property type="entry name" value="beta and beta-prime subunits of DNA dependent RNA-polymerase"/>
    <property type="match status" value="1"/>
</dbReference>